<proteinExistence type="inferred from homology"/>
<feature type="initiator methionine" description="Removed" evidence="1">
    <location>
        <position position="1"/>
    </location>
</feature>
<feature type="chain" id="PRO_0000109350" description="Carnitinyl-CoA dehydratase">
    <location>
        <begin position="2"/>
        <end position="261"/>
    </location>
</feature>
<feature type="active site" description="Nucleophile" evidence="2">
    <location>
        <position position="111"/>
    </location>
</feature>
<feature type="active site" description="Proton acceptor" evidence="2">
    <location>
        <position position="131"/>
    </location>
</feature>
<protein>
    <recommendedName>
        <fullName evidence="2">Carnitinyl-CoA dehydratase</fullName>
        <ecNumber evidence="2">4.2.1.149</ecNumber>
    </recommendedName>
    <alternativeName>
        <fullName evidence="2">Crotonobetainyl-CoA hydratase</fullName>
    </alternativeName>
</protein>
<accession>Q8XA35</accession>
<reference key="1">
    <citation type="journal article" date="2001" name="Nature">
        <title>Genome sequence of enterohaemorrhagic Escherichia coli O157:H7.</title>
        <authorList>
            <person name="Perna N.T."/>
            <person name="Plunkett G. III"/>
            <person name="Burland V."/>
            <person name="Mau B."/>
            <person name="Glasner J.D."/>
            <person name="Rose D.J."/>
            <person name="Mayhew G.F."/>
            <person name="Evans P.S."/>
            <person name="Gregor J."/>
            <person name="Kirkpatrick H.A."/>
            <person name="Posfai G."/>
            <person name="Hackett J."/>
            <person name="Klink S."/>
            <person name="Boutin A."/>
            <person name="Shao Y."/>
            <person name="Miller L."/>
            <person name="Grotbeck E.J."/>
            <person name="Davis N.W."/>
            <person name="Lim A."/>
            <person name="Dimalanta E.T."/>
            <person name="Potamousis K."/>
            <person name="Apodaca J."/>
            <person name="Anantharaman T.S."/>
            <person name="Lin J."/>
            <person name="Yen G."/>
            <person name="Schwartz D.C."/>
            <person name="Welch R.A."/>
            <person name="Blattner F.R."/>
        </authorList>
    </citation>
    <scope>NUCLEOTIDE SEQUENCE [LARGE SCALE GENOMIC DNA]</scope>
    <source>
        <strain>O157:H7 / EDL933 / ATCC 700927 / EHEC</strain>
    </source>
</reference>
<reference key="2">
    <citation type="journal article" date="2001" name="DNA Res.">
        <title>Complete genome sequence of enterohemorrhagic Escherichia coli O157:H7 and genomic comparison with a laboratory strain K-12.</title>
        <authorList>
            <person name="Hayashi T."/>
            <person name="Makino K."/>
            <person name="Ohnishi M."/>
            <person name="Kurokawa K."/>
            <person name="Ishii K."/>
            <person name="Yokoyama K."/>
            <person name="Han C.-G."/>
            <person name="Ohtsubo E."/>
            <person name="Nakayama K."/>
            <person name="Murata T."/>
            <person name="Tanaka M."/>
            <person name="Tobe T."/>
            <person name="Iida T."/>
            <person name="Takami H."/>
            <person name="Honda T."/>
            <person name="Sasakawa C."/>
            <person name="Ogasawara N."/>
            <person name="Yasunaga T."/>
            <person name="Kuhara S."/>
            <person name="Shiba T."/>
            <person name="Hattori M."/>
            <person name="Shinagawa H."/>
        </authorList>
    </citation>
    <scope>NUCLEOTIDE SEQUENCE [LARGE SCALE GENOMIC DNA]</scope>
    <source>
        <strain>O157:H7 / Sakai / RIMD 0509952 / EHEC</strain>
    </source>
</reference>
<keyword id="KW-0456">Lyase</keyword>
<keyword id="KW-1185">Reference proteome</keyword>
<name>CAID_ECO57</name>
<dbReference type="EC" id="4.2.1.149" evidence="2"/>
<dbReference type="EMBL" id="AE005174">
    <property type="protein sequence ID" value="AAG54339.1"/>
    <property type="status" value="ALT_INIT"/>
    <property type="molecule type" value="Genomic_DNA"/>
</dbReference>
<dbReference type="EMBL" id="BA000007">
    <property type="protein sequence ID" value="BAB33462.2"/>
    <property type="molecule type" value="Genomic_DNA"/>
</dbReference>
<dbReference type="PIR" id="G85484">
    <property type="entry name" value="G85484"/>
</dbReference>
<dbReference type="PIR" id="G90633">
    <property type="entry name" value="G90633"/>
</dbReference>
<dbReference type="RefSeq" id="NP_308066.2">
    <property type="nucleotide sequence ID" value="NC_002695.1"/>
</dbReference>
<dbReference type="RefSeq" id="WP_001303785.1">
    <property type="nucleotide sequence ID" value="NZ_VOAI01000002.1"/>
</dbReference>
<dbReference type="SMR" id="Q8XA35"/>
<dbReference type="STRING" id="155864.Z0042"/>
<dbReference type="GeneID" id="913435"/>
<dbReference type="KEGG" id="ece:Z0042"/>
<dbReference type="KEGG" id="ecs:ECs_0039"/>
<dbReference type="PATRIC" id="fig|386585.9.peg.136"/>
<dbReference type="eggNOG" id="COG1024">
    <property type="taxonomic scope" value="Bacteria"/>
</dbReference>
<dbReference type="HOGENOM" id="CLU_009834_7_6_6"/>
<dbReference type="UniPathway" id="UPA00117"/>
<dbReference type="Proteomes" id="UP000000558">
    <property type="component" value="Chromosome"/>
</dbReference>
<dbReference type="Proteomes" id="UP000002519">
    <property type="component" value="Chromosome"/>
</dbReference>
<dbReference type="GO" id="GO:0016836">
    <property type="term" value="F:hydro-lyase activity"/>
    <property type="evidence" value="ECO:0007669"/>
    <property type="project" value="UniProtKB-UniRule"/>
</dbReference>
<dbReference type="GO" id="GO:0008735">
    <property type="term" value="F:L-carnitine CoA-transferase activity"/>
    <property type="evidence" value="ECO:0007669"/>
    <property type="project" value="RHEA"/>
</dbReference>
<dbReference type="GO" id="GO:0009437">
    <property type="term" value="P:carnitine metabolic process"/>
    <property type="evidence" value="ECO:0007669"/>
    <property type="project" value="UniProtKB-UniRule"/>
</dbReference>
<dbReference type="GO" id="GO:0006635">
    <property type="term" value="P:fatty acid beta-oxidation"/>
    <property type="evidence" value="ECO:0007669"/>
    <property type="project" value="TreeGrafter"/>
</dbReference>
<dbReference type="CDD" id="cd06558">
    <property type="entry name" value="crotonase-like"/>
    <property type="match status" value="1"/>
</dbReference>
<dbReference type="FunFam" id="1.10.12.10:FF:000005">
    <property type="entry name" value="Carnitinyl-CoA dehydratase"/>
    <property type="match status" value="1"/>
</dbReference>
<dbReference type="FunFam" id="3.90.226.10:FF:000009">
    <property type="entry name" value="Carnitinyl-CoA dehydratase"/>
    <property type="match status" value="1"/>
</dbReference>
<dbReference type="Gene3D" id="3.90.226.10">
    <property type="entry name" value="2-enoyl-CoA Hydratase, Chain A, domain 1"/>
    <property type="match status" value="1"/>
</dbReference>
<dbReference type="Gene3D" id="1.10.12.10">
    <property type="entry name" value="Lyase 2-enoyl-coa Hydratase, Chain A, domain 2"/>
    <property type="match status" value="1"/>
</dbReference>
<dbReference type="HAMAP" id="MF_01051">
    <property type="entry name" value="CaiD"/>
    <property type="match status" value="1"/>
</dbReference>
<dbReference type="InterPro" id="IPR022852">
    <property type="entry name" value="Carnitinyl_CoA_dehydratase"/>
</dbReference>
<dbReference type="InterPro" id="IPR029045">
    <property type="entry name" value="ClpP/crotonase-like_dom_sf"/>
</dbReference>
<dbReference type="InterPro" id="IPR018376">
    <property type="entry name" value="Enoyl-CoA_hyd/isom_CS"/>
</dbReference>
<dbReference type="InterPro" id="IPR001753">
    <property type="entry name" value="Enoyl-CoA_hydra/iso"/>
</dbReference>
<dbReference type="InterPro" id="IPR014748">
    <property type="entry name" value="Enoyl-CoA_hydra_C"/>
</dbReference>
<dbReference type="NCBIfam" id="NF002936">
    <property type="entry name" value="PRK03580.1"/>
    <property type="match status" value="1"/>
</dbReference>
<dbReference type="PANTHER" id="PTHR11941:SF54">
    <property type="entry name" value="ENOYL-COA HYDRATASE, MITOCHONDRIAL"/>
    <property type="match status" value="1"/>
</dbReference>
<dbReference type="PANTHER" id="PTHR11941">
    <property type="entry name" value="ENOYL-COA HYDRATASE-RELATED"/>
    <property type="match status" value="1"/>
</dbReference>
<dbReference type="Pfam" id="PF00378">
    <property type="entry name" value="ECH_1"/>
    <property type="match status" value="1"/>
</dbReference>
<dbReference type="SUPFAM" id="SSF52096">
    <property type="entry name" value="ClpP/crotonase"/>
    <property type="match status" value="1"/>
</dbReference>
<dbReference type="PROSITE" id="PS00166">
    <property type="entry name" value="ENOYL_COA_HYDRATASE"/>
    <property type="match status" value="1"/>
</dbReference>
<sequence length="261" mass="28137">MSESLHLTRNGSILEITLDRPKANAIDAKTSFEMGEVFLNFRDDPQLRVAIITGAGEKFFSAGWDLKAAAEGEAPDADFGPGGFAGLTEIFNLDKPVIAAVNGYAFGGGFELALAADFIVCADNASFALPEAKLGIVPDSGGVLRLPKILPPAIVNEMVMTGRRMGAEEALRWGIVNRVVSQAELMDNARELAQQLVNSAPLAIAALKEIYRTTSEMPVEESYSYIRSGVLKHYPSVLHSEDAIEGPLAFAEKRDPVWKGR</sequence>
<evidence type="ECO:0000250" key="1"/>
<evidence type="ECO:0000255" key="2">
    <source>
        <dbReference type="HAMAP-Rule" id="MF_01051"/>
    </source>
</evidence>
<evidence type="ECO:0000305" key="3"/>
<organism>
    <name type="scientific">Escherichia coli O157:H7</name>
    <dbReference type="NCBI Taxonomy" id="83334"/>
    <lineage>
        <taxon>Bacteria</taxon>
        <taxon>Pseudomonadati</taxon>
        <taxon>Pseudomonadota</taxon>
        <taxon>Gammaproteobacteria</taxon>
        <taxon>Enterobacterales</taxon>
        <taxon>Enterobacteriaceae</taxon>
        <taxon>Escherichia</taxon>
    </lineage>
</organism>
<comment type="function">
    <text evidence="2">Catalyzes the reversible dehydration of L-carnitinyl-CoA to crotonobetainyl-CoA.</text>
</comment>
<comment type="catalytic activity">
    <reaction evidence="2">
        <text>(R)-carnitinyl-CoA = crotonobetainyl-CoA + H2O</text>
        <dbReference type="Rhea" id="RHEA:28338"/>
        <dbReference type="ChEBI" id="CHEBI:15377"/>
        <dbReference type="ChEBI" id="CHEBI:60932"/>
        <dbReference type="ChEBI" id="CHEBI:60933"/>
        <dbReference type="EC" id="4.2.1.149"/>
    </reaction>
</comment>
<comment type="pathway">
    <text evidence="2">Amine and polyamine metabolism; carnitine metabolism.</text>
</comment>
<comment type="similarity">
    <text evidence="2 3">Belongs to the enoyl-CoA hydratase/isomerase family.</text>
</comment>
<comment type="sequence caution" evidence="3">
    <conflict type="erroneous initiation">
        <sequence resource="EMBL-CDS" id="AAG54339"/>
    </conflict>
    <text>Extended N-terminus.</text>
</comment>
<gene>
    <name evidence="2" type="primary">caiD</name>
    <name type="ordered locus">Z0042</name>
    <name type="ordered locus">ECs0039</name>
</gene>